<comment type="function">
    <text evidence="3 6 10 12 13 14">Catalyzes the reversible interconversion of serine and glycine with tetrahydrofolate (THF) serving as the one-carbon carrier. This reaction serves as the major source of one-carbon groups required for the biosynthesis of purines, thymidylate, methionine, and other important biomolecules (PubMed:10858298, PubMed:1517215, PubMed:19883126, PubMed:3891721, PubMed:7925461). Also exhibits THF-independent aldolase activity toward beta-hydroxyamino acids, producing glycine and aldehydes, via a retro-aldol mechanism. Thus, is able to catalyze the cleavage of allothreonine and 3-phenylserine (PubMed:10858298, PubMed:1517215, PubMed:19883126, PubMed:3891721). Also catalyzes the irreversible conversion of 5,10-methenyltetrahydrofolate to 5-formyltetrahydrofolate (PubMed:10858298, PubMed:2201683).</text>
</comment>
<comment type="catalytic activity">
    <reaction evidence="1 3 5 6 10 13 14">
        <text>(6R)-5,10-methylene-5,6,7,8-tetrahydrofolate + glycine + H2O = (6S)-5,6,7,8-tetrahydrofolate + L-serine</text>
        <dbReference type="Rhea" id="RHEA:15481"/>
        <dbReference type="ChEBI" id="CHEBI:15377"/>
        <dbReference type="ChEBI" id="CHEBI:15636"/>
        <dbReference type="ChEBI" id="CHEBI:33384"/>
        <dbReference type="ChEBI" id="CHEBI:57305"/>
        <dbReference type="ChEBI" id="CHEBI:57453"/>
        <dbReference type="EC" id="2.1.2.1"/>
    </reaction>
</comment>
<comment type="catalytic activity">
    <reaction evidence="3 6 10 13">
        <text>L-allo-threonine = acetaldehyde + glycine</text>
        <dbReference type="Rhea" id="RHEA:26209"/>
        <dbReference type="ChEBI" id="CHEBI:15343"/>
        <dbReference type="ChEBI" id="CHEBI:57305"/>
        <dbReference type="ChEBI" id="CHEBI:58585"/>
    </reaction>
</comment>
<comment type="catalytic activity">
    <reaction evidence="3 12">
        <text>(6R)-5,10-methenyltetrahydrofolate + H2O = (6S)-5-formyl-5,6,7,8-tetrahydrofolate + H(+)</text>
        <dbReference type="Rhea" id="RHEA:34767"/>
        <dbReference type="ChEBI" id="CHEBI:15377"/>
        <dbReference type="ChEBI" id="CHEBI:15378"/>
        <dbReference type="ChEBI" id="CHEBI:57455"/>
        <dbReference type="ChEBI" id="CHEBI:57457"/>
    </reaction>
</comment>
<comment type="cofactor">
    <cofactor evidence="1 3 6 7 10 13">
        <name>pyridoxal 5'-phosphate</name>
        <dbReference type="ChEBI" id="CHEBI:597326"/>
    </cofactor>
</comment>
<comment type="biophysicochemical properties">
    <kinetics>
        <KM evidence="13">800 uM for L-serine</KM>
        <KM evidence="10">140 uM for serine</KM>
        <KM evidence="5 6">300 uM for serine</KM>
        <KM evidence="13">80 uM for tetrahydrofolate</KM>
        <KM evidence="10">7 uM for tetrahydrofolate</KM>
        <KM evidence="5">15 uM for tetrahydrofolate</KM>
        <KM evidence="10 13">1500 uM for L-allothreonine</KM>
        <KM evidence="6">1000 uM for L-allothreonine</KM>
        <text evidence="6">kcat is 10.7 sec(-1) with L-serine as substrate. kcat is 0.5 sec(-1) with L-allothreonine as substrate.</text>
    </kinetics>
</comment>
<comment type="pathway">
    <text evidence="1">One-carbon metabolism; tetrahydrofolate interconversion.</text>
</comment>
<comment type="pathway">
    <text evidence="1 16">Amino-acid biosynthesis; glycine biosynthesis; glycine from L-serine: step 1/1.</text>
</comment>
<comment type="subunit">
    <text evidence="1 2 3 9 10 13">Homodimer.</text>
</comment>
<comment type="interaction">
    <interactant intactId="EBI-909080">
        <id>P0A825</id>
    </interactant>
    <interactant intactId="EBI-909080">
        <id>P0A825</id>
        <label>glyA</label>
    </interactant>
    <organismsDiffer>false</organismsDiffer>
    <experiments>5</experiments>
</comment>
<comment type="subcellular location">
    <subcellularLocation>
        <location evidence="1 16">Cytoplasm</location>
    </subcellularLocation>
</comment>
<comment type="induction">
    <text evidence="4">By CsgD.</text>
</comment>
<comment type="similarity">
    <text evidence="1 16">Belongs to the SHMT family.</text>
</comment>
<organism>
    <name type="scientific">Escherichia coli (strain K12)</name>
    <dbReference type="NCBI Taxonomy" id="83333"/>
    <lineage>
        <taxon>Bacteria</taxon>
        <taxon>Pseudomonadati</taxon>
        <taxon>Pseudomonadota</taxon>
        <taxon>Gammaproteobacteria</taxon>
        <taxon>Enterobacterales</taxon>
        <taxon>Enterobacteriaceae</taxon>
        <taxon>Escherichia</taxon>
    </lineage>
</organism>
<reference key="1">
    <citation type="journal article" date="1983" name="Nucleic Acids Res.">
        <title>Complete nucleotide sequence of the E. coli glyA gene.</title>
        <authorList>
            <person name="Plamann M.D."/>
            <person name="Stauffer L.T."/>
            <person name="Urbanowski M.L."/>
            <person name="Stauffer G.V."/>
        </authorList>
    </citation>
    <scope>NUCLEOTIDE SEQUENCE [GENOMIC DNA]</scope>
    <source>
        <strain>K12</strain>
    </source>
</reference>
<reference key="2">
    <citation type="journal article" date="1997" name="DNA Res.">
        <title>Construction of a contiguous 874-kb sequence of the Escherichia coli-K12 genome corresponding to 50.0-68.8 min on the linkage map and analysis of its sequence features.</title>
        <authorList>
            <person name="Yamamoto Y."/>
            <person name="Aiba H."/>
            <person name="Baba T."/>
            <person name="Hayashi K."/>
            <person name="Inada T."/>
            <person name="Isono K."/>
            <person name="Itoh T."/>
            <person name="Kimura S."/>
            <person name="Kitagawa M."/>
            <person name="Makino K."/>
            <person name="Miki T."/>
            <person name="Mitsuhashi N."/>
            <person name="Mizobuchi K."/>
            <person name="Mori H."/>
            <person name="Nakade S."/>
            <person name="Nakamura Y."/>
            <person name="Nashimoto H."/>
            <person name="Oshima T."/>
            <person name="Oyama S."/>
            <person name="Saito N."/>
            <person name="Sampei G."/>
            <person name="Satoh Y."/>
            <person name="Sivasundaram S."/>
            <person name="Tagami H."/>
            <person name="Takahashi H."/>
            <person name="Takeda J."/>
            <person name="Takemoto K."/>
            <person name="Uehara K."/>
            <person name="Wada C."/>
            <person name="Yamagata S."/>
            <person name="Horiuchi T."/>
        </authorList>
    </citation>
    <scope>NUCLEOTIDE SEQUENCE [LARGE SCALE GENOMIC DNA]</scope>
    <source>
        <strain>K12 / W3110 / ATCC 27325 / DSM 5911</strain>
    </source>
</reference>
<reference key="3">
    <citation type="journal article" date="1997" name="Science">
        <title>The complete genome sequence of Escherichia coli K-12.</title>
        <authorList>
            <person name="Blattner F.R."/>
            <person name="Plunkett G. III"/>
            <person name="Bloch C.A."/>
            <person name="Perna N.T."/>
            <person name="Burland V."/>
            <person name="Riley M."/>
            <person name="Collado-Vides J."/>
            <person name="Glasner J.D."/>
            <person name="Rode C.K."/>
            <person name="Mayhew G.F."/>
            <person name="Gregor J."/>
            <person name="Davis N.W."/>
            <person name="Kirkpatrick H.A."/>
            <person name="Goeden M.A."/>
            <person name="Rose D.J."/>
            <person name="Mau B."/>
            <person name="Shao Y."/>
        </authorList>
    </citation>
    <scope>NUCLEOTIDE SEQUENCE [LARGE SCALE GENOMIC DNA]</scope>
    <source>
        <strain>K12 / MG1655 / ATCC 47076</strain>
    </source>
</reference>
<reference key="4">
    <citation type="journal article" date="2006" name="Mol. Syst. Biol.">
        <title>Highly accurate genome sequences of Escherichia coli K-12 strains MG1655 and W3110.</title>
        <authorList>
            <person name="Hayashi K."/>
            <person name="Morooka N."/>
            <person name="Yamamoto Y."/>
            <person name="Fujita K."/>
            <person name="Isono K."/>
            <person name="Choi S."/>
            <person name="Ohtsubo E."/>
            <person name="Baba T."/>
            <person name="Wanner B.L."/>
            <person name="Mori H."/>
            <person name="Horiuchi T."/>
        </authorList>
    </citation>
    <scope>NUCLEOTIDE SEQUENCE [LARGE SCALE GENOMIC DNA]</scope>
    <source>
        <strain>K12 / W3110 / ATCC 27325 / DSM 5911</strain>
    </source>
</reference>
<reference key="5">
    <citation type="journal article" date="1997" name="Electrophoresis">
        <title>Comparing the predicted and observed properties of proteins encoded in the genome of Escherichia coli K-12.</title>
        <authorList>
            <person name="Link A.J."/>
            <person name="Robison K."/>
            <person name="Church G.M."/>
        </authorList>
    </citation>
    <scope>PROTEIN SEQUENCE OF 1-19</scope>
    <source>
        <strain>K12 / EMG2</strain>
    </source>
</reference>
<reference key="6">
    <citation type="journal article" date="1991" name="Mol. Gen. Genet.">
        <title>Isolation and nucleotide sequence of the hmp gene that encodes a haemoglobin-like protein in Escherichia coli K-12.</title>
        <authorList>
            <person name="Vasudevan S.G."/>
            <person name="Armarego W.L.F."/>
            <person name="Shaw D.C."/>
            <person name="Lilley P.E."/>
            <person name="Dixon N.E."/>
            <person name="Poole R.K."/>
        </authorList>
    </citation>
    <scope>PROTEIN SEQUENCE OF 1-17</scope>
    <source>
        <strain>K12</strain>
    </source>
</reference>
<reference key="7">
    <citation type="submission" date="1994-09" db="UniProtKB">
        <authorList>
            <person name="Pasquali C."/>
            <person name="Sanchez J.-C."/>
            <person name="Ravier F."/>
            <person name="Golaz O."/>
            <person name="Hughes G.J."/>
            <person name="Frutiger S."/>
            <person name="Paquet N."/>
            <person name="Wilkins M."/>
            <person name="Appel R.D."/>
            <person name="Bairoch A."/>
            <person name="Hochstrasser D.F."/>
        </authorList>
    </citation>
    <scope>PROTEIN SEQUENCE OF 1-11</scope>
    <source>
        <strain>K12 / W3110 / ATCC 27325 / DSM 5911</strain>
    </source>
</reference>
<reference key="8">
    <citation type="journal article" date="1983" name="Gene">
        <title>Characterization of the Escherichia coli gene for serine hydroxymethyltransferase.</title>
        <authorList>
            <person name="Plamann M.D."/>
            <person name="Stauffer G.V."/>
        </authorList>
    </citation>
    <scope>NUCLEOTIDE SEQUENCE [GENOMIC DNA] OF 1-7</scope>
</reference>
<reference key="9">
    <citation type="journal article" date="1985" name="J. Bacteriol.">
        <title>Serine hydroxymethyltransferase from Escherichia coli: purification and properties.</title>
        <authorList>
            <person name="Schirch V."/>
            <person name="Hopkins S."/>
            <person name="Villar E."/>
            <person name="Angelaccio S."/>
        </authorList>
    </citation>
    <scope>PROTEIN SEQUENCE OF 1-3 AND 415-417</scope>
    <scope>FUNCTION</scope>
    <scope>CATALYTIC ACTIVITY</scope>
    <scope>COFACTOR</scope>
    <scope>BIOPHYSICOCHEMICAL PROPERTIES</scope>
    <scope>SUBUNIT</scope>
</reference>
<reference key="10">
    <citation type="journal article" date="1990" name="J. Biol. Chem.">
        <title>Serine hydroxymethyltransferase catalyzes the hydrolysis of 5,10-methenyltetrahydrofolate to 5-formyltetrahydrofolate.</title>
        <authorList>
            <person name="Stover P."/>
            <person name="Schirch V."/>
        </authorList>
    </citation>
    <scope>FUNCTION</scope>
    <scope>CATALYTIC ACTIVITY</scope>
</reference>
<reference key="11">
    <citation type="journal article" date="1992" name="J. Biol. Chem.">
        <title>Escherichia coli serine hydroxymethyltransferase. The role of histidine 228 in determining reaction specificity.</title>
        <authorList>
            <person name="Stover P."/>
            <person name="Zamora M."/>
            <person name="Shostak K."/>
            <person name="Gautam-Basak M."/>
            <person name="Schirch V."/>
        </authorList>
    </citation>
    <scope>FUNCTION</scope>
    <scope>CATALYTIC ACTIVITY</scope>
    <scope>COFACTOR</scope>
    <scope>BIOPHYSICOCHEMICAL PROPERTIES</scope>
    <scope>MUTAGENESIS OF HIS-228</scope>
</reference>
<reference key="12">
    <citation type="journal article" date="1994" name="Eur. J. Biochem.">
        <title>The function of arginine 363 as the substrate carboxyl-binding site in Escherichia coli serine hydroxymethyltransferase.</title>
        <authorList>
            <person name="Delle Fratte S."/>
            <person name="Iurescia S."/>
            <person name="Angelaccio S."/>
            <person name="Bossa F."/>
            <person name="Schirch V."/>
        </authorList>
    </citation>
    <scope>FUNCTION</scope>
    <scope>CATALYTIC ACTIVITY</scope>
    <scope>MUTAGENESIS OF ARG-363 AND ARG-372</scope>
</reference>
<reference key="13">
    <citation type="journal article" date="1997" name="Electrophoresis">
        <title>Escherichia coli proteome analysis using the gene-protein database.</title>
        <authorList>
            <person name="VanBogelen R.A."/>
            <person name="Abshire K.Z."/>
            <person name="Moldover B."/>
            <person name="Olson E.R."/>
            <person name="Neidhardt F.C."/>
        </authorList>
    </citation>
    <scope>IDENTIFICATION BY 2D-GEL</scope>
</reference>
<reference key="14">
    <citation type="journal article" date="2003" name="J. Biol. Chem.">
        <title>Role of proline residues in the folding of serine hydroxymethyltransferase.</title>
        <authorList>
            <person name="Fu T.F."/>
            <person name="Boja E.S."/>
            <person name="Safo M.K."/>
            <person name="Schirch V."/>
        </authorList>
    </citation>
    <scope>CATALYTIC ACTIVITY</scope>
    <scope>BIOPHYSICOCHEMICAL PROPERTIES</scope>
    <scope>MUTAGENESIS OF PRO-214; PRO-216; PRO-218; PRO-258 AND PRO-264</scope>
</reference>
<reference key="15">
    <citation type="journal article" date="2003" name="Microbiology">
        <title>CsgD, a regulator of curli and cellulose synthesis, also regulates serine hydroxymethyltransferase synthesis in Escherichia coli K-12.</title>
        <authorList>
            <person name="Chirwa N.T."/>
            <person name="Herrington M.B."/>
        </authorList>
    </citation>
    <scope>INDUCTION</scope>
</reference>
<reference key="16">
    <citation type="journal article" date="2007" name="Biochem. J.">
        <title>The mechanism of addition of pyridoxal 5'-phosphate to Escherichia coli apo-serine hydroxymethyltransferase.</title>
        <authorList>
            <person name="Malerba F."/>
            <person name="Bellelli A."/>
            <person name="Giorgi A."/>
            <person name="Bossa F."/>
            <person name="Contestabile R."/>
        </authorList>
    </citation>
    <scope>COFACTOR</scope>
    <scope>REACTION MECHANISM</scope>
</reference>
<reference key="17">
    <citation type="journal article" date="2009" name="Mol. Cell. Proteomics">
        <title>Lysine acetylation is a highly abundant and evolutionarily conserved modification in Escherichia coli.</title>
        <authorList>
            <person name="Zhang J."/>
            <person name="Sprung R."/>
            <person name="Pei J."/>
            <person name="Tan X."/>
            <person name="Kim S."/>
            <person name="Zhu H."/>
            <person name="Liu C.F."/>
            <person name="Grishin N.V."/>
            <person name="Zhao Y."/>
        </authorList>
    </citation>
    <scope>ACETYLATION [LARGE SCALE ANALYSIS] AT LYS-54; LYS-250; LYS-285; LYS-354 AND LYS-375</scope>
    <scope>IDENTIFICATION BY MASS SPECTROMETRY</scope>
    <source>
        <strain>K12 / JW1106</strain>
        <strain>K12 / MG1655 / ATCC 47076</strain>
    </source>
</reference>
<reference key="18">
    <citation type="journal article" date="2009" name="FEBS J.">
        <title>The role of evolutionarily conserved hydrophobic contacts in the quaternary structure stability of Escherichia coli serine hydroxymethyltransferase.</title>
        <authorList>
            <person name="Florio R."/>
            <person name="Chiaraluce R."/>
            <person name="Consalvi V."/>
            <person name="Paiardini A."/>
            <person name="Catacchio B."/>
            <person name="Bossa F."/>
            <person name="Contestabile R."/>
        </authorList>
    </citation>
    <scope>MUTAGENESIS OF LEU-85 AND LEU-276</scope>
    <scope>SUBUNIT</scope>
</reference>
<reference key="19">
    <citation type="journal article" date="2011" name="Nat. Chem. Biol.">
        <title>Identification of lysine succinylation as a new post-translational modification.</title>
        <authorList>
            <person name="Zhang Z."/>
            <person name="Tan M."/>
            <person name="Xie Z."/>
            <person name="Dai L."/>
            <person name="Chen Y."/>
            <person name="Zhao Y."/>
        </authorList>
    </citation>
    <scope>SUCCINYLATION AT LYS-62; LYS-242; LYS-250; LYS-277; LYS-293; LYS-331; LYS-346 AND LYS-354</scope>
    <source>
        <strain>K12</strain>
    </source>
</reference>
<reference evidence="20" key="20">
    <citation type="journal article" date="2000" name="Biochemistry">
        <title>Role of tyrosine 65 in the mechanism of serine hydroxymethyltransferase.</title>
        <authorList>
            <person name="Contestabile R."/>
            <person name="Angelaccio S."/>
            <person name="Bossa F."/>
            <person name="Wright H.T."/>
            <person name="Scarsdale N."/>
            <person name="Kazanina G."/>
            <person name="Schirch V."/>
        </authorList>
    </citation>
    <scope>X-RAY CRYSTALLOGRAPHY (2.7 ANGSTROMS) OF MUTANT PHE-65 IN COMPLEX WITH PYRIDOXYL-GLYCINE-PHOSPHATE AND 5-FORMYLTETRAHYDROFOLATE</scope>
    <scope>FUNCTION</scope>
    <scope>CATALYTIC ACTIVITY</scope>
    <scope>COFACTOR</scope>
    <scope>MUTAGENESIS OF TYR-65</scope>
</reference>
<reference evidence="19" key="21">
    <citation type="journal article" date="2000" name="J. Mol. Biol.">
        <title>Crystal structure at 2.4-A resolution of E. coli serine hydroxymethyltransferase in complex with glycine substrate and 5-formyl tetrahydrofolate.</title>
        <authorList>
            <person name="Scarsdale J.N."/>
            <person name="Radaev S."/>
            <person name="Kazanina G."/>
            <person name="Schirch V."/>
            <person name="Wright H.T."/>
        </authorList>
    </citation>
    <scope>X-RAY CRYSTALLOGRAPHY (2.4 ANGSTROMS) IN COMPLEX WITH PYRIDOXYL-GLYCINE-PHOSPHATE AND 5-FORMYLTETRAHYDROFOLATE</scope>
    <scope>SUBUNIT</scope>
</reference>
<reference evidence="21" key="22">
    <citation type="journal article" date="2009" name="Biochemistry">
        <title>Role of a conserved active site cation-pi interaction in Escherichia coli serine hydroxymethyltransferase.</title>
        <authorList>
            <person name="Vivoli M."/>
            <person name="Angelucci F."/>
            <person name="Ilari A."/>
            <person name="Morea V."/>
            <person name="Angelaccio S."/>
            <person name="di Salvo M.L."/>
            <person name="Contestabile R."/>
        </authorList>
    </citation>
    <scope>X-RAY CRYSTALLOGRAPHY (3.3 ANGSTROMS) OF MUTANT PHE-55 IN COMPLEX WITH PYRIDOXAL PHOSPHATE</scope>
    <scope>FUNCTION</scope>
    <scope>CATALYTIC ACTIVITY</scope>
    <scope>COFACTOR</scope>
    <scope>BIOPHYSICOCHEMICAL PROPERTIES</scope>
    <scope>MUTAGENESIS OF TYR-55 AND ARG-235</scope>
</reference>
<sequence>MLKREMNIADYDAELWQAMEQEKVRQEEHIELIASENYTSPRVMQAQGSQLTNKYAEGYPGKRYYGGCEYVDIVEQLAIDRAKELFGADYANVQPHSGSQANFAVYTALLEPGDTVLGMNLAHGGHLTHGSPVNFSGKLYNIVPYGIDATGHIDYADLEKQAKEHKPKMIIGGFSAYSGVVDWAKMREIADSIGAYLFVDMAHVAGLVAAGVYPNPVPHAHVVTTTTHKTLAGPRGGLILAKGGSEELYKKLNSAVFPGGQGGPLMHVIAGKAVALKEAMEPEFKTYQQQVAKNAKAMVEVFLERGYKVVSGGTDNHLFLVDLVDKNLTGKEADAALGRANITVNKNSVPNDPKSPFVTSGIRVGTPAITRRGFKEAEAKELAGWMCDVLDSINDEAVIERIKGKVLDICARYPVYA</sequence>
<dbReference type="EC" id="2.1.2.1" evidence="1 3 5 6 10 14"/>
<dbReference type="EMBL" id="V00283">
    <property type="protein sequence ID" value="CAA23547.1"/>
    <property type="molecule type" value="Genomic_DNA"/>
</dbReference>
<dbReference type="EMBL" id="U00096">
    <property type="protein sequence ID" value="AAC75604.1"/>
    <property type="molecule type" value="Genomic_DNA"/>
</dbReference>
<dbReference type="EMBL" id="AP009048">
    <property type="protein sequence ID" value="BAA16459.1"/>
    <property type="molecule type" value="Genomic_DNA"/>
</dbReference>
<dbReference type="EMBL" id="J01620">
    <property type="protein sequence ID" value="AAA23912.1"/>
    <property type="molecule type" value="Genomic_DNA"/>
</dbReference>
<dbReference type="PIR" id="A00559">
    <property type="entry name" value="XYECS"/>
</dbReference>
<dbReference type="RefSeq" id="NP_417046.1">
    <property type="nucleotide sequence ID" value="NC_000913.3"/>
</dbReference>
<dbReference type="RefSeq" id="WP_000919159.1">
    <property type="nucleotide sequence ID" value="NZ_STEB01000011.1"/>
</dbReference>
<dbReference type="PDB" id="1DFO">
    <property type="method" value="X-ray"/>
    <property type="resolution" value="2.40 A"/>
    <property type="chains" value="A/B/C/D=1-417"/>
</dbReference>
<dbReference type="PDB" id="1EQB">
    <property type="method" value="X-ray"/>
    <property type="resolution" value="2.70 A"/>
    <property type="chains" value="A/B/C/D=1-417"/>
</dbReference>
<dbReference type="PDB" id="3G8M">
    <property type="method" value="X-ray"/>
    <property type="resolution" value="3.30 A"/>
    <property type="chains" value="A=1-417"/>
</dbReference>
<dbReference type="PDBsum" id="1DFO"/>
<dbReference type="PDBsum" id="1EQB"/>
<dbReference type="PDBsum" id="3G8M"/>
<dbReference type="SMR" id="P0A825"/>
<dbReference type="BioGRID" id="4261314">
    <property type="interactions" value="228"/>
</dbReference>
<dbReference type="DIP" id="DIP-36205N"/>
<dbReference type="FunCoup" id="P0A825">
    <property type="interactions" value="933"/>
</dbReference>
<dbReference type="IntAct" id="P0A825">
    <property type="interactions" value="8"/>
</dbReference>
<dbReference type="MINT" id="P0A825"/>
<dbReference type="STRING" id="511145.b2551"/>
<dbReference type="iPTMnet" id="P0A825"/>
<dbReference type="jPOST" id="P0A825"/>
<dbReference type="PaxDb" id="511145-b2551"/>
<dbReference type="EnsemblBacteria" id="AAC75604">
    <property type="protein sequence ID" value="AAC75604"/>
    <property type="gene ID" value="b2551"/>
</dbReference>
<dbReference type="GeneID" id="89517346"/>
<dbReference type="GeneID" id="947022"/>
<dbReference type="KEGG" id="ecj:JW2535"/>
<dbReference type="KEGG" id="eco:b2551"/>
<dbReference type="KEGG" id="ecoc:C3026_14125"/>
<dbReference type="PATRIC" id="fig|1411691.4.peg.4183"/>
<dbReference type="EchoBASE" id="EB0403"/>
<dbReference type="eggNOG" id="COG0112">
    <property type="taxonomic scope" value="Bacteria"/>
</dbReference>
<dbReference type="HOGENOM" id="CLU_022477_2_1_6"/>
<dbReference type="InParanoid" id="P0A825"/>
<dbReference type="OMA" id="CQFANVQ"/>
<dbReference type="OrthoDB" id="9803846at2"/>
<dbReference type="PhylomeDB" id="P0A825"/>
<dbReference type="BioCyc" id="EcoCyc:GLYOHMETRANS-MONOMER"/>
<dbReference type="BioCyc" id="MetaCyc:GLYOHMETRANS-MONOMER"/>
<dbReference type="BRENDA" id="2.1.2.1">
    <property type="organism ID" value="2026"/>
</dbReference>
<dbReference type="BRENDA" id="4.1.2.48">
    <property type="organism ID" value="2026"/>
</dbReference>
<dbReference type="SABIO-RK" id="P0A825"/>
<dbReference type="UniPathway" id="UPA00193"/>
<dbReference type="UniPathway" id="UPA00288">
    <property type="reaction ID" value="UER01023"/>
</dbReference>
<dbReference type="EvolutionaryTrace" id="P0A825"/>
<dbReference type="PRO" id="PR:P0A825"/>
<dbReference type="Proteomes" id="UP000000625">
    <property type="component" value="Chromosome"/>
</dbReference>
<dbReference type="GO" id="GO:0005737">
    <property type="term" value="C:cytoplasm"/>
    <property type="evidence" value="ECO:0000318"/>
    <property type="project" value="GO_Central"/>
</dbReference>
<dbReference type="GO" id="GO:0005829">
    <property type="term" value="C:cytosol"/>
    <property type="evidence" value="ECO:0000314"/>
    <property type="project" value="EcoCyc"/>
</dbReference>
<dbReference type="GO" id="GO:0016020">
    <property type="term" value="C:membrane"/>
    <property type="evidence" value="ECO:0007005"/>
    <property type="project" value="UniProtKB"/>
</dbReference>
<dbReference type="GO" id="GO:0004372">
    <property type="term" value="F:glycine hydroxymethyltransferase activity"/>
    <property type="evidence" value="ECO:0000314"/>
    <property type="project" value="EcoCyc"/>
</dbReference>
<dbReference type="GO" id="GO:0042802">
    <property type="term" value="F:identical protein binding"/>
    <property type="evidence" value="ECO:0000353"/>
    <property type="project" value="IntAct"/>
</dbReference>
<dbReference type="GO" id="GO:0008732">
    <property type="term" value="F:L-allo-threonine aldolase activity"/>
    <property type="evidence" value="ECO:0007669"/>
    <property type="project" value="RHEA"/>
</dbReference>
<dbReference type="GO" id="GO:0042803">
    <property type="term" value="F:protein homodimerization activity"/>
    <property type="evidence" value="ECO:0000314"/>
    <property type="project" value="EcoCyc"/>
</dbReference>
<dbReference type="GO" id="GO:0030170">
    <property type="term" value="F:pyridoxal phosphate binding"/>
    <property type="evidence" value="ECO:0000314"/>
    <property type="project" value="EcoCyc"/>
</dbReference>
<dbReference type="GO" id="GO:0008270">
    <property type="term" value="F:zinc ion binding"/>
    <property type="evidence" value="ECO:0000314"/>
    <property type="project" value="EcoliWiki"/>
</dbReference>
<dbReference type="GO" id="GO:0019264">
    <property type="term" value="P:glycine biosynthetic process from serine"/>
    <property type="evidence" value="ECO:0000314"/>
    <property type="project" value="EcoCyc"/>
</dbReference>
<dbReference type="GO" id="GO:0006546">
    <property type="term" value="P:glycine catabolic process"/>
    <property type="evidence" value="ECO:0000315"/>
    <property type="project" value="EcoCyc"/>
</dbReference>
<dbReference type="GO" id="GO:0006564">
    <property type="term" value="P:L-serine biosynthetic process"/>
    <property type="evidence" value="ECO:0000316"/>
    <property type="project" value="EcoliWiki"/>
</dbReference>
<dbReference type="GO" id="GO:0006565">
    <property type="term" value="P:L-serine catabolic process"/>
    <property type="evidence" value="ECO:0000314"/>
    <property type="project" value="EcoCyc"/>
</dbReference>
<dbReference type="GO" id="GO:0035999">
    <property type="term" value="P:tetrahydrofolate interconversion"/>
    <property type="evidence" value="ECO:0007669"/>
    <property type="project" value="UniProtKB-UniRule"/>
</dbReference>
<dbReference type="GO" id="GO:0046653">
    <property type="term" value="P:tetrahydrofolate metabolic process"/>
    <property type="evidence" value="ECO:0000318"/>
    <property type="project" value="GO_Central"/>
</dbReference>
<dbReference type="CDD" id="cd00378">
    <property type="entry name" value="SHMT"/>
    <property type="match status" value="1"/>
</dbReference>
<dbReference type="FunFam" id="3.40.640.10:FF:000001">
    <property type="entry name" value="Serine hydroxymethyltransferase"/>
    <property type="match status" value="1"/>
</dbReference>
<dbReference type="FunFam" id="3.90.1150.10:FF:000003">
    <property type="entry name" value="Serine hydroxymethyltransferase"/>
    <property type="match status" value="1"/>
</dbReference>
<dbReference type="Gene3D" id="3.90.1150.10">
    <property type="entry name" value="Aspartate Aminotransferase, domain 1"/>
    <property type="match status" value="1"/>
</dbReference>
<dbReference type="Gene3D" id="3.40.640.10">
    <property type="entry name" value="Type I PLP-dependent aspartate aminotransferase-like (Major domain)"/>
    <property type="match status" value="1"/>
</dbReference>
<dbReference type="HAMAP" id="MF_00051">
    <property type="entry name" value="SHMT"/>
    <property type="match status" value="1"/>
</dbReference>
<dbReference type="InterPro" id="IPR015424">
    <property type="entry name" value="PyrdxlP-dep_Trfase"/>
</dbReference>
<dbReference type="InterPro" id="IPR015421">
    <property type="entry name" value="PyrdxlP-dep_Trfase_major"/>
</dbReference>
<dbReference type="InterPro" id="IPR015422">
    <property type="entry name" value="PyrdxlP-dep_Trfase_small"/>
</dbReference>
<dbReference type="InterPro" id="IPR001085">
    <property type="entry name" value="Ser_HO-MeTrfase"/>
</dbReference>
<dbReference type="InterPro" id="IPR049943">
    <property type="entry name" value="Ser_HO-MeTrfase-like"/>
</dbReference>
<dbReference type="InterPro" id="IPR019798">
    <property type="entry name" value="Ser_HO-MeTrfase_PLP_BS"/>
</dbReference>
<dbReference type="InterPro" id="IPR039429">
    <property type="entry name" value="SHMT-like_dom"/>
</dbReference>
<dbReference type="NCBIfam" id="NF000586">
    <property type="entry name" value="PRK00011.1"/>
    <property type="match status" value="1"/>
</dbReference>
<dbReference type="PANTHER" id="PTHR11680">
    <property type="entry name" value="SERINE HYDROXYMETHYLTRANSFERASE"/>
    <property type="match status" value="1"/>
</dbReference>
<dbReference type="PANTHER" id="PTHR11680:SF50">
    <property type="entry name" value="SERINE HYDROXYMETHYLTRANSFERASE"/>
    <property type="match status" value="1"/>
</dbReference>
<dbReference type="Pfam" id="PF00464">
    <property type="entry name" value="SHMT"/>
    <property type="match status" value="1"/>
</dbReference>
<dbReference type="PIRSF" id="PIRSF000412">
    <property type="entry name" value="SHMT"/>
    <property type="match status" value="1"/>
</dbReference>
<dbReference type="SUPFAM" id="SSF53383">
    <property type="entry name" value="PLP-dependent transferases"/>
    <property type="match status" value="1"/>
</dbReference>
<dbReference type="PROSITE" id="PS00096">
    <property type="entry name" value="SHMT"/>
    <property type="match status" value="1"/>
</dbReference>
<proteinExistence type="evidence at protein level"/>
<protein>
    <recommendedName>
        <fullName evidence="1 15">Serine hydroxymethyltransferase</fullName>
        <shortName evidence="1 15">SHMT</shortName>
        <shortName evidence="1">Serine methylase</shortName>
        <ecNumber evidence="1 3 5 6 10 14">2.1.2.1</ecNumber>
    </recommendedName>
</protein>
<feature type="chain" id="PRO_0000113573" description="Serine hydroxymethyltransferase">
    <location>
        <begin position="1"/>
        <end position="417"/>
    </location>
</feature>
<feature type="binding site" evidence="17 18 19 20">
    <location>
        <position position="35"/>
    </location>
    <ligand>
        <name>glycine</name>
        <dbReference type="ChEBI" id="CHEBI:57305"/>
    </ligand>
</feature>
<feature type="binding site" evidence="17 18 19 20">
    <location>
        <position position="55"/>
    </location>
    <ligand>
        <name>pyridoxal 5'-phosphate</name>
        <dbReference type="ChEBI" id="CHEBI:597326"/>
    </ligand>
</feature>
<feature type="binding site" evidence="17 19">
    <location>
        <position position="65"/>
    </location>
    <ligand>
        <name>glycine</name>
        <dbReference type="ChEBI" id="CHEBI:57305"/>
    </ligand>
</feature>
<feature type="binding site" evidence="17 18 19 20">
    <location>
        <position position="99"/>
    </location>
    <ligand>
        <name>pyridoxal 5'-phosphate</name>
        <dbReference type="ChEBI" id="CHEBI:597326"/>
    </ligand>
</feature>
<feature type="binding site" evidence="1 17 18 19 20">
    <location>
        <position position="121"/>
    </location>
    <ligand>
        <name>(6S)-5,6,7,8-tetrahydrofolate</name>
        <dbReference type="ChEBI" id="CHEBI:57453"/>
    </ligand>
</feature>
<feature type="binding site" evidence="1 17 18 19 20">
    <location>
        <begin position="125"/>
        <end position="127"/>
    </location>
    <ligand>
        <name>(6S)-5,6,7,8-tetrahydrofolate</name>
        <dbReference type="ChEBI" id="CHEBI:57453"/>
    </ligand>
</feature>
<feature type="binding site" evidence="17 18 19 20">
    <location>
        <position position="175"/>
    </location>
    <ligand>
        <name>pyridoxal 5'-phosphate</name>
        <dbReference type="ChEBI" id="CHEBI:597326"/>
    </ligand>
</feature>
<feature type="binding site" evidence="17 18 19 20">
    <location>
        <position position="203"/>
    </location>
    <ligand>
        <name>pyridoxal 5'-phosphate</name>
        <dbReference type="ChEBI" id="CHEBI:597326"/>
    </ligand>
</feature>
<feature type="binding site" evidence="10 21">
    <location>
        <position position="228"/>
    </location>
    <ligand>
        <name>pyridoxal 5'-phosphate</name>
        <dbReference type="ChEBI" id="CHEBI:597326"/>
    </ligand>
</feature>
<feature type="binding site" evidence="10 21">
    <location>
        <position position="235"/>
    </location>
    <ligand>
        <name>pyridoxal 5'-phosphate</name>
        <dbReference type="ChEBI" id="CHEBI:597326"/>
    </ligand>
</feature>
<feature type="binding site" evidence="17 18 19 20">
    <location>
        <position position="246"/>
    </location>
    <ligand>
        <name>(6S)-5,6,7,8-tetrahydrofolate</name>
        <dbReference type="ChEBI" id="CHEBI:57453"/>
    </ligand>
</feature>
<feature type="binding site" evidence="17 18 19 20">
    <location>
        <position position="263"/>
    </location>
    <ligand>
        <name>pyridoxal 5'-phosphate</name>
        <dbReference type="ChEBI" id="CHEBI:597326"/>
    </ligand>
</feature>
<feature type="binding site" evidence="1 17 18 19 20">
    <location>
        <begin position="355"/>
        <end position="357"/>
    </location>
    <ligand>
        <name>(6S)-5,6,7,8-tetrahydrofolate</name>
        <dbReference type="ChEBI" id="CHEBI:57453"/>
    </ligand>
</feature>
<feature type="binding site" evidence="17 18 19 20">
    <location>
        <position position="363"/>
    </location>
    <ligand>
        <name>glycine</name>
        <dbReference type="ChEBI" id="CHEBI:57305"/>
    </ligand>
</feature>
<feature type="site" description="Transaldimination and stability">
    <location>
        <position position="55"/>
    </location>
</feature>
<feature type="site" description="Plays an important role in substrate specificity" evidence="1 6">
    <location>
        <position position="228"/>
    </location>
</feature>
<feature type="site" description="Transaldimination and stability">
    <location>
        <position position="235"/>
    </location>
</feature>
<feature type="modified residue" description="N6-acetyllysine" evidence="8">
    <location>
        <position position="54"/>
    </location>
</feature>
<feature type="modified residue" description="N6-succinyllysine" evidence="11">
    <location>
        <position position="62"/>
    </location>
</feature>
<feature type="modified residue" description="N6-(pyridoxal phosphate)lysine" evidence="1 10 21">
    <location>
        <position position="229"/>
    </location>
</feature>
<feature type="modified residue" description="N6-succinyllysine" evidence="11">
    <location>
        <position position="242"/>
    </location>
</feature>
<feature type="modified residue" description="N6-acetyllysine; alternate" evidence="8">
    <location>
        <position position="250"/>
    </location>
</feature>
<feature type="modified residue" description="N6-succinyllysine; alternate" evidence="11">
    <location>
        <position position="250"/>
    </location>
</feature>
<feature type="modified residue" description="N6-succinyllysine" evidence="11">
    <location>
        <position position="277"/>
    </location>
</feature>
<feature type="modified residue" description="N6-acetyllysine" evidence="8">
    <location>
        <position position="285"/>
    </location>
</feature>
<feature type="modified residue" description="N6-succinyllysine" evidence="11">
    <location>
        <position position="293"/>
    </location>
</feature>
<feature type="modified residue" description="N6-succinyllysine" evidence="11">
    <location>
        <position position="331"/>
    </location>
</feature>
<feature type="modified residue" description="N6-succinyllysine" evidence="11">
    <location>
        <position position="346"/>
    </location>
</feature>
<feature type="modified residue" description="N6-acetyllysine; alternate" evidence="8">
    <location>
        <position position="354"/>
    </location>
</feature>
<feature type="modified residue" description="N6-succinyllysine; alternate" evidence="11">
    <location>
        <position position="354"/>
    </location>
</feature>
<feature type="modified residue" description="N6-acetyllysine" evidence="8">
    <location>
        <position position="375"/>
    </location>
</feature>
<feature type="mutagenesis site" description="50 and 15-fold increase in the affinity for serine and tetrahydrofolate, respectively, and 4-fold decrease in the catalytic efficiency." evidence="10">
    <original>Y</original>
    <variation>F</variation>
    <location>
        <position position="55"/>
    </location>
</feature>
<feature type="mutagenesis site" description="Decrease in catalytic activity." evidence="3">
    <original>Y</original>
    <variation>F</variation>
    <location>
        <position position="65"/>
    </location>
</feature>
<feature type="mutagenesis site" description="Alteration of the dimer-monomer equilibrium accompanied by minor changes in the catalytic properties and whitout any significant change of tertiary structure. In the monomeric state; when associated with A-276." evidence="9">
    <original>L</original>
    <variation>A</variation>
    <location>
        <position position="85"/>
    </location>
</feature>
<feature type="mutagenesis site" description="No significant difference in catalytic efficiency and affinity compared to the wild-type." evidence="5">
    <original>P</original>
    <variation>A</variation>
    <location>
        <position position="214"/>
    </location>
</feature>
<feature type="mutagenesis site" description="No significant difference in catalytic efficiency and affinity compared to the wild-type." evidence="5">
    <original>P</original>
    <variation>G</variation>
    <location>
        <position position="214"/>
    </location>
</feature>
<feature type="mutagenesis site" description="No significant difference in catalytic efficiency and affinity compared to the wild-type. Alteration in the folding rate." evidence="5">
    <original>P</original>
    <variation>A</variation>
    <location>
        <position position="216"/>
    </location>
</feature>
<feature type="mutagenesis site" description="Important decrease in affinity and catalytic efficiency. Severely compromised in folding into a catalytically competent enzyme." evidence="5">
    <original>P</original>
    <variation>G</variation>
    <location>
        <position position="216"/>
    </location>
</feature>
<feature type="mutagenesis site" description="No significant difference in catalytic efficiency and affinity compared to the wild-type." evidence="5">
    <original>P</original>
    <variation>A</variation>
    <location>
        <position position="218"/>
    </location>
</feature>
<feature type="mutagenesis site" description="No significant difference in catalytic efficiency and affinity compared to the wild-type." evidence="5">
    <original>P</original>
    <variation>G</variation>
    <location>
        <position position="218"/>
    </location>
</feature>
<feature type="mutagenesis site" description="Utilize substrates and substrate analogs more effectively for a variety of alternate non-physiological reactions." evidence="6">
    <original>H</original>
    <variation>D</variation>
    <variation>N</variation>
    <location>
        <position position="228"/>
    </location>
</feature>
<feature type="mutagenesis site" description="1500- and 20-fold increase in the affinity for serine and tetrahydrofolate, respectively, and 15-fold decrease in the catalytic efficiency." evidence="10">
    <original>R</original>
    <variation>K</variation>
    <location>
        <position position="235"/>
    </location>
</feature>
<feature type="mutagenesis site" description="450- and 11-fold increase in the affinity for serine and tetrahydrofolate, respectively, and 60-fold decrease in the catalytic efficiency." evidence="10">
    <original>R</original>
    <variation>L</variation>
    <location>
        <position position="235"/>
    </location>
</feature>
<feature type="mutagenesis site" description="900- and 17-fold increase in the affinity for serine and tetrahydrofolate, respectively, and 30-fold decrease in the catalytic efficiency." evidence="10">
    <original>R</original>
    <variation>Q</variation>
    <location>
        <position position="235"/>
    </location>
</feature>
<feature type="mutagenesis site" description="Important decrease in affinity and catalytic efficiency. Reduced thermal stability." evidence="5">
    <original>P</original>
    <variation>A</variation>
    <location>
        <position position="258"/>
    </location>
</feature>
<feature type="mutagenesis site" description="Important decrease in affinity and catalytic efficiency." evidence="5">
    <original>P</original>
    <variation>G</variation>
    <location>
        <position position="258"/>
    </location>
</feature>
<feature type="mutagenesis site" description="Important decrease in affinity and catalytic efficiency." evidence="5">
    <original>P</original>
    <variation>A</variation>
    <location>
        <position position="264"/>
    </location>
</feature>
<feature type="mutagenesis site" description="Important decrease in affinity and catalytic efficiency." evidence="5">
    <original>P</original>
    <variation>G</variation>
    <location>
        <position position="264"/>
    </location>
</feature>
<feature type="mutagenesis site" description="Alteration of the dimer-monomer equilibrium accompanied by minor changes in the catalytic properties and whitout any significant change of tertiary structure. In the monomeric state; when associated with A-85." evidence="9">
    <original>L</original>
    <variation>A</variation>
    <location>
        <position position="276"/>
    </location>
</feature>
<feature type="mutagenesis site" description="It does not bind serine and glycine and shows no activity with serine as the substrate." evidence="14">
    <original>R</original>
    <variation>A</variation>
    <location>
        <position position="363"/>
    </location>
</feature>
<feature type="mutagenesis site" description="Exhibits only 0.03% of the catalytic activity of the wild-type and a 15-fold reduction in affinity for glycine and serine." evidence="14">
    <original>R</original>
    <variation>K</variation>
    <location>
        <position position="363"/>
    </location>
</feature>
<feature type="mutagenesis site" description="No significant difference compared to the wild-type." evidence="14">
    <original>R</original>
    <variation>A</variation>
    <location>
        <position position="372"/>
    </location>
</feature>
<feature type="mutagenesis site" description="No significant difference compared to the wild-type." evidence="14">
    <original>R</original>
    <variation>K</variation>
    <location>
        <position position="372"/>
    </location>
</feature>
<feature type="helix" evidence="22">
    <location>
        <begin position="8"/>
        <end position="11"/>
    </location>
</feature>
<feature type="helix" evidence="22">
    <location>
        <begin position="13"/>
        <end position="28"/>
    </location>
</feature>
<feature type="strand" evidence="22">
    <location>
        <begin position="29"/>
        <end position="31"/>
    </location>
</feature>
<feature type="helix" evidence="22">
    <location>
        <begin position="41"/>
        <end position="47"/>
    </location>
</feature>
<feature type="helix" evidence="22">
    <location>
        <begin position="50"/>
        <end position="53"/>
    </location>
</feature>
<feature type="strand" evidence="22">
    <location>
        <begin position="62"/>
        <end position="66"/>
    </location>
</feature>
<feature type="helix" evidence="22">
    <location>
        <begin position="69"/>
        <end position="86"/>
    </location>
</feature>
<feature type="strand" evidence="22">
    <location>
        <begin position="89"/>
        <end position="92"/>
    </location>
</feature>
<feature type="helix" evidence="22">
    <location>
        <begin position="98"/>
        <end position="109"/>
    </location>
</feature>
<feature type="strand" evidence="22">
    <location>
        <begin position="115"/>
        <end position="119"/>
    </location>
</feature>
<feature type="turn" evidence="22">
    <location>
        <begin position="121"/>
        <end position="124"/>
    </location>
</feature>
<feature type="helix" evidence="22">
    <location>
        <begin position="127"/>
        <end position="129"/>
    </location>
</feature>
<feature type="helix" evidence="22">
    <location>
        <begin position="135"/>
        <end position="139"/>
    </location>
</feature>
<feature type="strand" evidence="22">
    <location>
        <begin position="140"/>
        <end position="145"/>
    </location>
</feature>
<feature type="strand" evidence="22">
    <location>
        <begin position="149"/>
        <end position="152"/>
    </location>
</feature>
<feature type="helix" evidence="22">
    <location>
        <begin position="155"/>
        <end position="165"/>
    </location>
</feature>
<feature type="strand" evidence="22">
    <location>
        <begin position="168"/>
        <end position="173"/>
    </location>
</feature>
<feature type="helix" evidence="22">
    <location>
        <begin position="183"/>
        <end position="192"/>
    </location>
</feature>
<feature type="strand" evidence="22">
    <location>
        <begin position="196"/>
        <end position="200"/>
    </location>
</feature>
<feature type="turn" evidence="22">
    <location>
        <begin position="202"/>
        <end position="204"/>
    </location>
</feature>
<feature type="helix" evidence="22">
    <location>
        <begin position="205"/>
        <end position="209"/>
    </location>
</feature>
<feature type="turn" evidence="22">
    <location>
        <begin position="217"/>
        <end position="219"/>
    </location>
</feature>
<feature type="strand" evidence="22">
    <location>
        <begin position="220"/>
        <end position="229"/>
    </location>
</feature>
<feature type="strand" evidence="22">
    <location>
        <begin position="237"/>
        <end position="243"/>
    </location>
</feature>
<feature type="helix" evidence="22">
    <location>
        <begin position="246"/>
        <end position="256"/>
    </location>
</feature>
<feature type="turn" evidence="22">
    <location>
        <begin position="257"/>
        <end position="260"/>
    </location>
</feature>
<feature type="helix" evidence="22">
    <location>
        <begin position="266"/>
        <end position="278"/>
    </location>
</feature>
<feature type="helix" evidence="22">
    <location>
        <begin position="282"/>
        <end position="304"/>
    </location>
</feature>
<feature type="helix" evidence="22">
    <location>
        <begin position="310"/>
        <end position="312"/>
    </location>
</feature>
<feature type="strand" evidence="22">
    <location>
        <begin position="315"/>
        <end position="322"/>
    </location>
</feature>
<feature type="helix" evidence="22">
    <location>
        <begin position="324"/>
        <end position="326"/>
    </location>
</feature>
<feature type="helix" evidence="22">
    <location>
        <begin position="330"/>
        <end position="339"/>
    </location>
</feature>
<feature type="turn" evidence="22">
    <location>
        <begin position="356"/>
        <end position="358"/>
    </location>
</feature>
<feature type="strand" evidence="22">
    <location>
        <begin position="360"/>
        <end position="365"/>
    </location>
</feature>
<feature type="helix" evidence="22">
    <location>
        <begin position="367"/>
        <end position="371"/>
    </location>
</feature>
<feature type="helix" evidence="22">
    <location>
        <begin position="376"/>
        <end position="391"/>
    </location>
</feature>
<feature type="turn" evidence="22">
    <location>
        <begin position="392"/>
        <end position="394"/>
    </location>
</feature>
<feature type="helix" evidence="22">
    <location>
        <begin position="396"/>
        <end position="412"/>
    </location>
</feature>
<feature type="strand" evidence="22">
    <location>
        <begin position="415"/>
        <end position="417"/>
    </location>
</feature>
<evidence type="ECO:0000255" key="1">
    <source>
        <dbReference type="HAMAP-Rule" id="MF_00051"/>
    </source>
</evidence>
<evidence type="ECO:0000269" key="2">
    <source>
    </source>
</evidence>
<evidence type="ECO:0000269" key="3">
    <source>
    </source>
</evidence>
<evidence type="ECO:0000269" key="4">
    <source>
    </source>
</evidence>
<evidence type="ECO:0000269" key="5">
    <source>
    </source>
</evidence>
<evidence type="ECO:0000269" key="6">
    <source>
    </source>
</evidence>
<evidence type="ECO:0000269" key="7">
    <source>
    </source>
</evidence>
<evidence type="ECO:0000269" key="8">
    <source>
    </source>
</evidence>
<evidence type="ECO:0000269" key="9">
    <source>
    </source>
</evidence>
<evidence type="ECO:0000269" key="10">
    <source>
    </source>
</evidence>
<evidence type="ECO:0000269" key="11">
    <source>
    </source>
</evidence>
<evidence type="ECO:0000269" key="12">
    <source>
    </source>
</evidence>
<evidence type="ECO:0000269" key="13">
    <source>
    </source>
</evidence>
<evidence type="ECO:0000269" key="14">
    <source>
    </source>
</evidence>
<evidence type="ECO:0000303" key="15">
    <source>
    </source>
</evidence>
<evidence type="ECO:0000305" key="16"/>
<evidence type="ECO:0000305" key="17">
    <source>
    </source>
</evidence>
<evidence type="ECO:0000305" key="18">
    <source>
    </source>
</evidence>
<evidence type="ECO:0007744" key="19">
    <source>
        <dbReference type="PDB" id="1DFO"/>
    </source>
</evidence>
<evidence type="ECO:0007744" key="20">
    <source>
        <dbReference type="PDB" id="1EQB"/>
    </source>
</evidence>
<evidence type="ECO:0007744" key="21">
    <source>
        <dbReference type="PDB" id="3G8M"/>
    </source>
</evidence>
<evidence type="ECO:0007829" key="22">
    <source>
        <dbReference type="PDB" id="1DFO"/>
    </source>
</evidence>
<gene>
    <name evidence="1 15" type="primary">glyA</name>
    <name type="ordered locus">b2551</name>
    <name type="ordered locus">JW2535</name>
</gene>
<accession>P0A825</accession>
<accession>P00477</accession>
<keyword id="KW-0002">3D-structure</keyword>
<keyword id="KW-0007">Acetylation</keyword>
<keyword id="KW-0028">Amino-acid biosynthesis</keyword>
<keyword id="KW-0963">Cytoplasm</keyword>
<keyword id="KW-0903">Direct protein sequencing</keyword>
<keyword id="KW-0554">One-carbon metabolism</keyword>
<keyword id="KW-0663">Pyridoxal phosphate</keyword>
<keyword id="KW-1185">Reference proteome</keyword>
<keyword id="KW-0808">Transferase</keyword>
<name>GLYA_ECOLI</name>